<reference key="1">
    <citation type="journal article" date="2000" name="J. Cell Biol.">
        <title>The regulatory complex of Drosophila melanogaster 26S proteasomes. Subunit composition and localization of a deubiquitylating enzyme.</title>
        <authorList>
            <person name="Hoelzl H."/>
            <person name="Kapelari B."/>
            <person name="Kellermann J."/>
            <person name="Seemueller E."/>
            <person name="Suemegi M."/>
            <person name="Udvardy A."/>
            <person name="Medalia O."/>
            <person name="Sperling J."/>
            <person name="Mueller S.A."/>
            <person name="Engel A."/>
            <person name="Baumeister W."/>
        </authorList>
    </citation>
    <scope>NUCLEOTIDE SEQUENCE</scope>
    <scope>PROTEIN SEQUENCE OF 263-271</scope>
    <scope>FUNCTION</scope>
    <source>
        <tissue>Embryo</tissue>
    </source>
</reference>
<reference key="2">
    <citation type="journal article" date="2000" name="Science">
        <title>The genome sequence of Drosophila melanogaster.</title>
        <authorList>
            <person name="Adams M.D."/>
            <person name="Celniker S.E."/>
            <person name="Holt R.A."/>
            <person name="Evans C.A."/>
            <person name="Gocayne J.D."/>
            <person name="Amanatides P.G."/>
            <person name="Scherer S.E."/>
            <person name="Li P.W."/>
            <person name="Hoskins R.A."/>
            <person name="Galle R.F."/>
            <person name="George R.A."/>
            <person name="Lewis S.E."/>
            <person name="Richards S."/>
            <person name="Ashburner M."/>
            <person name="Henderson S.N."/>
            <person name="Sutton G.G."/>
            <person name="Wortman J.R."/>
            <person name="Yandell M.D."/>
            <person name="Zhang Q."/>
            <person name="Chen L.X."/>
            <person name="Brandon R.C."/>
            <person name="Rogers Y.-H.C."/>
            <person name="Blazej R.G."/>
            <person name="Champe M."/>
            <person name="Pfeiffer B.D."/>
            <person name="Wan K.H."/>
            <person name="Doyle C."/>
            <person name="Baxter E.G."/>
            <person name="Helt G."/>
            <person name="Nelson C.R."/>
            <person name="Miklos G.L.G."/>
            <person name="Abril J.F."/>
            <person name="Agbayani A."/>
            <person name="An H.-J."/>
            <person name="Andrews-Pfannkoch C."/>
            <person name="Baldwin D."/>
            <person name="Ballew R.M."/>
            <person name="Basu A."/>
            <person name="Baxendale J."/>
            <person name="Bayraktaroglu L."/>
            <person name="Beasley E.M."/>
            <person name="Beeson K.Y."/>
            <person name="Benos P.V."/>
            <person name="Berman B.P."/>
            <person name="Bhandari D."/>
            <person name="Bolshakov S."/>
            <person name="Borkova D."/>
            <person name="Botchan M.R."/>
            <person name="Bouck J."/>
            <person name="Brokstein P."/>
            <person name="Brottier P."/>
            <person name="Burtis K.C."/>
            <person name="Busam D.A."/>
            <person name="Butler H."/>
            <person name="Cadieu E."/>
            <person name="Center A."/>
            <person name="Chandra I."/>
            <person name="Cherry J.M."/>
            <person name="Cawley S."/>
            <person name="Dahlke C."/>
            <person name="Davenport L.B."/>
            <person name="Davies P."/>
            <person name="de Pablos B."/>
            <person name="Delcher A."/>
            <person name="Deng Z."/>
            <person name="Mays A.D."/>
            <person name="Dew I."/>
            <person name="Dietz S.M."/>
            <person name="Dodson K."/>
            <person name="Doup L.E."/>
            <person name="Downes M."/>
            <person name="Dugan-Rocha S."/>
            <person name="Dunkov B.C."/>
            <person name="Dunn P."/>
            <person name="Durbin K.J."/>
            <person name="Evangelista C.C."/>
            <person name="Ferraz C."/>
            <person name="Ferriera S."/>
            <person name="Fleischmann W."/>
            <person name="Fosler C."/>
            <person name="Gabrielian A.E."/>
            <person name="Garg N.S."/>
            <person name="Gelbart W.M."/>
            <person name="Glasser K."/>
            <person name="Glodek A."/>
            <person name="Gong F."/>
            <person name="Gorrell J.H."/>
            <person name="Gu Z."/>
            <person name="Guan P."/>
            <person name="Harris M."/>
            <person name="Harris N.L."/>
            <person name="Harvey D.A."/>
            <person name="Heiman T.J."/>
            <person name="Hernandez J.R."/>
            <person name="Houck J."/>
            <person name="Hostin D."/>
            <person name="Houston K.A."/>
            <person name="Howland T.J."/>
            <person name="Wei M.-H."/>
            <person name="Ibegwam C."/>
            <person name="Jalali M."/>
            <person name="Kalush F."/>
            <person name="Karpen G.H."/>
            <person name="Ke Z."/>
            <person name="Kennison J.A."/>
            <person name="Ketchum K.A."/>
            <person name="Kimmel B.E."/>
            <person name="Kodira C.D."/>
            <person name="Kraft C.L."/>
            <person name="Kravitz S."/>
            <person name="Kulp D."/>
            <person name="Lai Z."/>
            <person name="Lasko P."/>
            <person name="Lei Y."/>
            <person name="Levitsky A.A."/>
            <person name="Li J.H."/>
            <person name="Li Z."/>
            <person name="Liang Y."/>
            <person name="Lin X."/>
            <person name="Liu X."/>
            <person name="Mattei B."/>
            <person name="McIntosh T.C."/>
            <person name="McLeod M.P."/>
            <person name="McPherson D."/>
            <person name="Merkulov G."/>
            <person name="Milshina N.V."/>
            <person name="Mobarry C."/>
            <person name="Morris J."/>
            <person name="Moshrefi A."/>
            <person name="Mount S.M."/>
            <person name="Moy M."/>
            <person name="Murphy B."/>
            <person name="Murphy L."/>
            <person name="Muzny D.M."/>
            <person name="Nelson D.L."/>
            <person name="Nelson D.R."/>
            <person name="Nelson K.A."/>
            <person name="Nixon K."/>
            <person name="Nusskern D.R."/>
            <person name="Pacleb J.M."/>
            <person name="Palazzolo M."/>
            <person name="Pittman G.S."/>
            <person name="Pan S."/>
            <person name="Pollard J."/>
            <person name="Puri V."/>
            <person name="Reese M.G."/>
            <person name="Reinert K."/>
            <person name="Remington K."/>
            <person name="Saunders R.D.C."/>
            <person name="Scheeler F."/>
            <person name="Shen H."/>
            <person name="Shue B.C."/>
            <person name="Siden-Kiamos I."/>
            <person name="Simpson M."/>
            <person name="Skupski M.P."/>
            <person name="Smith T.J."/>
            <person name="Spier E."/>
            <person name="Spradling A.C."/>
            <person name="Stapleton M."/>
            <person name="Strong R."/>
            <person name="Sun E."/>
            <person name="Svirskas R."/>
            <person name="Tector C."/>
            <person name="Turner R."/>
            <person name="Venter E."/>
            <person name="Wang A.H."/>
            <person name="Wang X."/>
            <person name="Wang Z.-Y."/>
            <person name="Wassarman D.A."/>
            <person name="Weinstock G.M."/>
            <person name="Weissenbach J."/>
            <person name="Williams S.M."/>
            <person name="Woodage T."/>
            <person name="Worley K.C."/>
            <person name="Wu D."/>
            <person name="Yang S."/>
            <person name="Yao Q.A."/>
            <person name="Ye J."/>
            <person name="Yeh R.-F."/>
            <person name="Zaveri J.S."/>
            <person name="Zhan M."/>
            <person name="Zhang G."/>
            <person name="Zhao Q."/>
            <person name="Zheng L."/>
            <person name="Zheng X.H."/>
            <person name="Zhong F.N."/>
            <person name="Zhong W."/>
            <person name="Zhou X."/>
            <person name="Zhu S.C."/>
            <person name="Zhu X."/>
            <person name="Smith H.O."/>
            <person name="Gibbs R.A."/>
            <person name="Myers E.W."/>
            <person name="Rubin G.M."/>
            <person name="Venter J.C."/>
        </authorList>
    </citation>
    <scope>NUCLEOTIDE SEQUENCE [LARGE SCALE GENOMIC DNA]</scope>
    <source>
        <strain>Berkeley</strain>
    </source>
</reference>
<reference key="3">
    <citation type="journal article" date="2002" name="Genome Biol.">
        <title>Annotation of the Drosophila melanogaster euchromatic genome: a systematic review.</title>
        <authorList>
            <person name="Misra S."/>
            <person name="Crosby M.A."/>
            <person name="Mungall C.J."/>
            <person name="Matthews B.B."/>
            <person name="Campbell K.S."/>
            <person name="Hradecky P."/>
            <person name="Huang Y."/>
            <person name="Kaminker J.S."/>
            <person name="Millburn G.H."/>
            <person name="Prochnik S.E."/>
            <person name="Smith C.D."/>
            <person name="Tupy J.L."/>
            <person name="Whitfield E.J."/>
            <person name="Bayraktaroglu L."/>
            <person name="Berman B.P."/>
            <person name="Bettencourt B.R."/>
            <person name="Celniker S.E."/>
            <person name="de Grey A.D.N.J."/>
            <person name="Drysdale R.A."/>
            <person name="Harris N.L."/>
            <person name="Richter J."/>
            <person name="Russo S."/>
            <person name="Schroeder A.J."/>
            <person name="Shu S.Q."/>
            <person name="Stapleton M."/>
            <person name="Yamada C."/>
            <person name="Ashburner M."/>
            <person name="Gelbart W.M."/>
            <person name="Rubin G.M."/>
            <person name="Lewis S.E."/>
        </authorList>
    </citation>
    <scope>GENOME REANNOTATION</scope>
    <source>
        <strain>Berkeley</strain>
    </source>
</reference>
<reference key="4">
    <citation type="journal article" date="2002" name="Genome Biol.">
        <title>A Drosophila full-length cDNA resource.</title>
        <authorList>
            <person name="Stapleton M."/>
            <person name="Carlson J.W."/>
            <person name="Brokstein P."/>
            <person name="Yu C."/>
            <person name="Champe M."/>
            <person name="George R.A."/>
            <person name="Guarin H."/>
            <person name="Kronmiller B."/>
            <person name="Pacleb J.M."/>
            <person name="Park S."/>
            <person name="Wan K.H."/>
            <person name="Rubin G.M."/>
            <person name="Celniker S.E."/>
        </authorList>
    </citation>
    <scope>NUCLEOTIDE SEQUENCE [LARGE SCALE MRNA]</scope>
    <source>
        <strain>Berkeley</strain>
        <tissue>Embryo</tissue>
    </source>
</reference>
<reference key="5">
    <citation type="submission" date="1999-10" db="EMBL/GenBank/DDBJ databases">
        <authorList>
            <person name="Roxstrom-Lindquist K."/>
            <person name="Faye I."/>
        </authorList>
    </citation>
    <scope>NUCLEOTIDE SEQUENCE [MRNA] OF 80-308</scope>
    <source>
        <tissue>Imaginal disk</tissue>
    </source>
</reference>
<accession>Q9V3H2</accession>
<accession>Q9NIU3</accession>
<proteinExistence type="evidence at protein level"/>
<protein>
    <recommendedName>
        <fullName>26S proteasome non-ATPase regulatory subunit 14</fullName>
        <ecNumber>3.4.19.-</ecNumber>
    </recommendedName>
    <alternativeName>
        <fullName>26S proteasome regulatory complex subunit p37B</fullName>
    </alternativeName>
    <alternativeName>
        <fullName>26S proteasome regulatory subunit rpn11</fullName>
    </alternativeName>
    <alternativeName>
        <fullName>Yippee-interacting protein 5</fullName>
    </alternativeName>
</protein>
<dbReference type="EC" id="3.4.19.-"/>
<dbReference type="EMBL" id="AF145313">
    <property type="protein sequence ID" value="AAF08394.1"/>
    <property type="molecule type" value="mRNA"/>
</dbReference>
<dbReference type="EMBL" id="AE014134">
    <property type="protein sequence ID" value="AAF52215.1"/>
    <property type="molecule type" value="Genomic_DNA"/>
</dbReference>
<dbReference type="EMBL" id="AY070977">
    <property type="protein sequence ID" value="AAL48599.1"/>
    <property type="molecule type" value="mRNA"/>
</dbReference>
<dbReference type="EMBL" id="AF195189">
    <property type="protein sequence ID" value="AAF27818.1"/>
    <property type="molecule type" value="mRNA"/>
</dbReference>
<dbReference type="RefSeq" id="NP_608905.1">
    <property type="nucleotide sequence ID" value="NM_135061.4"/>
</dbReference>
<dbReference type="SMR" id="Q9V3H2"/>
<dbReference type="BioGRID" id="59913">
    <property type="interactions" value="36"/>
</dbReference>
<dbReference type="ComplexPortal" id="CPX-9070">
    <property type="entry name" value="26S proteasome complex"/>
</dbReference>
<dbReference type="ComplexPortal" id="CPX-9087">
    <property type="entry name" value="26S proteasome complex, testis-specific variant"/>
</dbReference>
<dbReference type="FunCoup" id="Q9V3H2">
    <property type="interactions" value="1637"/>
</dbReference>
<dbReference type="IntAct" id="Q9V3H2">
    <property type="interactions" value="34"/>
</dbReference>
<dbReference type="STRING" id="7227.FBpp0078664"/>
<dbReference type="MEROPS" id="M67.A11"/>
<dbReference type="GlyGen" id="Q9V3H2">
    <property type="glycosylation" value="1 site"/>
</dbReference>
<dbReference type="PaxDb" id="7227-FBpp0078664"/>
<dbReference type="EnsemblMetazoa" id="FBtr0079027">
    <property type="protein sequence ID" value="FBpp0078664"/>
    <property type="gene ID" value="FBgn0028694"/>
</dbReference>
<dbReference type="GeneID" id="33738"/>
<dbReference type="KEGG" id="dme:Dmel_CG18174"/>
<dbReference type="AGR" id="FB:FBgn0028694"/>
<dbReference type="CTD" id="33738"/>
<dbReference type="FlyBase" id="FBgn0028694">
    <property type="gene designation" value="Rpn11"/>
</dbReference>
<dbReference type="VEuPathDB" id="VectorBase:FBgn0028694"/>
<dbReference type="eggNOG" id="KOG1555">
    <property type="taxonomic scope" value="Eukaryota"/>
</dbReference>
<dbReference type="GeneTree" id="ENSGT00730000111116"/>
<dbReference type="HOGENOM" id="CLU_052991_0_1_1"/>
<dbReference type="InParanoid" id="Q9V3H2"/>
<dbReference type="OMA" id="KTGRHEM"/>
<dbReference type="OrthoDB" id="605656at2759"/>
<dbReference type="PhylomeDB" id="Q9V3H2"/>
<dbReference type="BRENDA" id="3.4.25.1">
    <property type="organism ID" value="1994"/>
</dbReference>
<dbReference type="Reactome" id="R-DME-1169091">
    <property type="pathway name" value="Activation of NF-kappaB in B cells"/>
</dbReference>
<dbReference type="Reactome" id="R-DME-1234176">
    <property type="pathway name" value="Oxygen-dependent proline hydroxylation of Hypoxia-inducible Factor Alpha"/>
</dbReference>
<dbReference type="Reactome" id="R-DME-1236978">
    <property type="pathway name" value="Cross-presentation of soluble exogenous antigens (endosomes)"/>
</dbReference>
<dbReference type="Reactome" id="R-DME-174084">
    <property type="pathway name" value="Autodegradation of Cdh1 by Cdh1:APC/C"/>
</dbReference>
<dbReference type="Reactome" id="R-DME-174154">
    <property type="pathway name" value="APC/C:Cdc20 mediated degradation of Securin"/>
</dbReference>
<dbReference type="Reactome" id="R-DME-174178">
    <property type="pathway name" value="APC/C:Cdh1 mediated degradation of Cdc20 and other APC/C:Cdh1 targeted proteins in late mitosis/early G1"/>
</dbReference>
<dbReference type="Reactome" id="R-DME-174184">
    <property type="pathway name" value="Cdc20:Phospho-APC/C mediated degradation of Cyclin A"/>
</dbReference>
<dbReference type="Reactome" id="R-DME-187577">
    <property type="pathway name" value="SCF(Skp2)-mediated degradation of p27/p21"/>
</dbReference>
<dbReference type="Reactome" id="R-DME-195253">
    <property type="pathway name" value="Degradation of beta-catenin by the destruction complex"/>
</dbReference>
<dbReference type="Reactome" id="R-DME-202424">
    <property type="pathway name" value="Downstream TCR signaling"/>
</dbReference>
<dbReference type="Reactome" id="R-DME-209360">
    <property type="pathway name" value="Ubiquitination and proteolysis of phosphorylated CI"/>
</dbReference>
<dbReference type="Reactome" id="R-DME-209406">
    <property type="pathway name" value="Degradation of NF-kappa-B inhibitor, CACT"/>
</dbReference>
<dbReference type="Reactome" id="R-DME-209461">
    <property type="pathway name" value="Ubiquitination and degradation of phosphorylated ARM"/>
</dbReference>
<dbReference type="Reactome" id="R-DME-216167">
    <property type="pathway name" value="Nuclear CI is degraded"/>
</dbReference>
<dbReference type="Reactome" id="R-DME-2467813">
    <property type="pathway name" value="Separation of Sister Chromatids"/>
</dbReference>
<dbReference type="Reactome" id="R-DME-2871837">
    <property type="pathway name" value="FCERI mediated NF-kB activation"/>
</dbReference>
<dbReference type="Reactome" id="R-DME-350562">
    <property type="pathway name" value="Regulation of ornithine decarboxylase (ODC)"/>
</dbReference>
<dbReference type="Reactome" id="R-DME-382556">
    <property type="pathway name" value="ABC-family proteins mediated transport"/>
</dbReference>
<dbReference type="Reactome" id="R-DME-432395">
    <property type="pathway name" value="Degradation of TIM"/>
</dbReference>
<dbReference type="Reactome" id="R-DME-432524">
    <property type="pathway name" value="Degradation of PER"/>
</dbReference>
<dbReference type="Reactome" id="R-DME-432626">
    <property type="pathway name" value="Circadian Clock pathway"/>
</dbReference>
<dbReference type="Reactome" id="R-DME-450408">
    <property type="pathway name" value="AUF1 (hnRNP D0) binds and destabilizes mRNA"/>
</dbReference>
<dbReference type="Reactome" id="R-DME-4608870">
    <property type="pathway name" value="Asymmetric localization of PCP proteins"/>
</dbReference>
<dbReference type="Reactome" id="R-DME-4641257">
    <property type="pathway name" value="Degradation of AXIN"/>
</dbReference>
<dbReference type="Reactome" id="R-DME-4641258">
    <property type="pathway name" value="Degradation of DVL"/>
</dbReference>
<dbReference type="Reactome" id="R-DME-5358346">
    <property type="pathway name" value="Hedgehog ligand biogenesis"/>
</dbReference>
<dbReference type="Reactome" id="R-DME-538864">
    <property type="pathway name" value="Degradation of CRY"/>
</dbReference>
<dbReference type="Reactome" id="R-DME-5607761">
    <property type="pathway name" value="Dectin-1 mediated noncanonical NF-kB signaling"/>
</dbReference>
<dbReference type="Reactome" id="R-DME-5607764">
    <property type="pathway name" value="CLEC7A (Dectin-1) signaling"/>
</dbReference>
<dbReference type="Reactome" id="R-DME-5610780">
    <property type="pathway name" value="Degradation of GLI1 by the proteasome"/>
</dbReference>
<dbReference type="Reactome" id="R-DME-5610785">
    <property type="pathway name" value="GLI3 is processed to GLI3R by the proteasome"/>
</dbReference>
<dbReference type="Reactome" id="R-DME-5632684">
    <property type="pathway name" value="Hedgehog 'on' state"/>
</dbReference>
<dbReference type="Reactome" id="R-DME-5658442">
    <property type="pathway name" value="Regulation of RAS by GAPs"/>
</dbReference>
<dbReference type="Reactome" id="R-DME-5676590">
    <property type="pathway name" value="NIK--&gt;noncanonical NF-kB signaling"/>
</dbReference>
<dbReference type="Reactome" id="R-DME-5689603">
    <property type="pathway name" value="UCH proteinases"/>
</dbReference>
<dbReference type="Reactome" id="R-DME-5689880">
    <property type="pathway name" value="Ub-specific processing proteases"/>
</dbReference>
<dbReference type="Reactome" id="R-DME-5689901">
    <property type="pathway name" value="Metalloprotease DUBs"/>
</dbReference>
<dbReference type="Reactome" id="R-DME-6798695">
    <property type="pathway name" value="Neutrophil degranulation"/>
</dbReference>
<dbReference type="Reactome" id="R-DME-68949">
    <property type="pathway name" value="Orc1 removal from chromatin"/>
</dbReference>
<dbReference type="Reactome" id="R-DME-69017">
    <property type="pathway name" value="CDK-mediated phosphorylation and removal of Cdc6"/>
</dbReference>
<dbReference type="Reactome" id="R-DME-69601">
    <property type="pathway name" value="Ubiquitin Mediated Degradation of Phosphorylated Cdc25A"/>
</dbReference>
<dbReference type="Reactome" id="R-DME-75815">
    <property type="pathway name" value="Ubiquitin-dependent degradation of Cyclin D"/>
</dbReference>
<dbReference type="Reactome" id="R-DME-8854050">
    <property type="pathway name" value="FBXL7 down-regulates AURKA during mitotic entry and in early mitosis"/>
</dbReference>
<dbReference type="Reactome" id="R-DME-8939236">
    <property type="pathway name" value="RUNX1 regulates transcription of genes involved in differentiation of HSCs"/>
</dbReference>
<dbReference type="Reactome" id="R-DME-8939902">
    <property type="pathway name" value="Regulation of RUNX2 expression and activity"/>
</dbReference>
<dbReference type="Reactome" id="R-DME-8941858">
    <property type="pathway name" value="Regulation of RUNX3 expression and activity"/>
</dbReference>
<dbReference type="Reactome" id="R-DME-8948751">
    <property type="pathway name" value="Regulation of PTEN stability and activity"/>
</dbReference>
<dbReference type="Reactome" id="R-DME-8951664">
    <property type="pathway name" value="Neddylation"/>
</dbReference>
<dbReference type="Reactome" id="R-DME-9020702">
    <property type="pathway name" value="Interleukin-1 signaling"/>
</dbReference>
<dbReference type="Reactome" id="R-DME-9755511">
    <property type="pathway name" value="KEAP1-NFE2L2 pathway"/>
</dbReference>
<dbReference type="Reactome" id="R-DME-9762114">
    <property type="pathway name" value="GSK3B and BTRC:CUL1-mediated-degradation of NFE2L2"/>
</dbReference>
<dbReference type="Reactome" id="R-DME-983168">
    <property type="pathway name" value="Antigen processing: Ubiquitination &amp; Proteasome degradation"/>
</dbReference>
<dbReference type="Reactome" id="R-DME-9907900">
    <property type="pathway name" value="Proteasome assembly"/>
</dbReference>
<dbReference type="BioGRID-ORCS" id="33738">
    <property type="hits" value="1 hit in 1 CRISPR screen"/>
</dbReference>
<dbReference type="GenomeRNAi" id="33738"/>
<dbReference type="PRO" id="PR:Q9V3H2"/>
<dbReference type="Proteomes" id="UP000000803">
    <property type="component" value="Chromosome 2L"/>
</dbReference>
<dbReference type="Bgee" id="FBgn0028694">
    <property type="expression patterns" value="Expressed in secondary oocyte and 179 other cell types or tissues"/>
</dbReference>
<dbReference type="GO" id="GO:0005829">
    <property type="term" value="C:cytosol"/>
    <property type="evidence" value="ECO:0000304"/>
    <property type="project" value="Reactome"/>
</dbReference>
<dbReference type="GO" id="GO:0005654">
    <property type="term" value="C:nucleoplasm"/>
    <property type="evidence" value="ECO:0000304"/>
    <property type="project" value="Reactome"/>
</dbReference>
<dbReference type="GO" id="GO:0005634">
    <property type="term" value="C:nucleus"/>
    <property type="evidence" value="ECO:0000318"/>
    <property type="project" value="GO_Central"/>
</dbReference>
<dbReference type="GO" id="GO:0000502">
    <property type="term" value="C:proteasome complex"/>
    <property type="evidence" value="ECO:0000314"/>
    <property type="project" value="FlyBase"/>
</dbReference>
<dbReference type="GO" id="GO:0005838">
    <property type="term" value="C:proteasome regulatory particle"/>
    <property type="evidence" value="ECO:0000314"/>
    <property type="project" value="FlyBase"/>
</dbReference>
<dbReference type="GO" id="GO:0008541">
    <property type="term" value="C:proteasome regulatory particle, lid subcomplex"/>
    <property type="evidence" value="ECO:0000250"/>
    <property type="project" value="FlyBase"/>
</dbReference>
<dbReference type="GO" id="GO:0046872">
    <property type="term" value="F:metal ion binding"/>
    <property type="evidence" value="ECO:0007669"/>
    <property type="project" value="UniProtKB-KW"/>
</dbReference>
<dbReference type="GO" id="GO:0140492">
    <property type="term" value="F:metal-dependent deubiquitinase activity"/>
    <property type="evidence" value="ECO:0000250"/>
    <property type="project" value="FlyBase"/>
</dbReference>
<dbReference type="GO" id="GO:0070628">
    <property type="term" value="F:proteasome binding"/>
    <property type="evidence" value="ECO:0000318"/>
    <property type="project" value="GO_Central"/>
</dbReference>
<dbReference type="GO" id="GO:0043161">
    <property type="term" value="P:proteasome-mediated ubiquitin-dependent protein catabolic process"/>
    <property type="evidence" value="ECO:0000315"/>
    <property type="project" value="FlyBase"/>
</dbReference>
<dbReference type="CDD" id="cd08069">
    <property type="entry name" value="MPN_RPN11_CSN5"/>
    <property type="match status" value="1"/>
</dbReference>
<dbReference type="FunFam" id="3.40.140.10:FF:000001">
    <property type="entry name" value="26S proteasome non-ATPase regulatory subunit"/>
    <property type="match status" value="1"/>
</dbReference>
<dbReference type="Gene3D" id="3.40.140.10">
    <property type="entry name" value="Cytidine Deaminase, domain 2"/>
    <property type="match status" value="1"/>
</dbReference>
<dbReference type="InterPro" id="IPR000555">
    <property type="entry name" value="JAMM/MPN+_dom"/>
</dbReference>
<dbReference type="InterPro" id="IPR050242">
    <property type="entry name" value="JAMM_MPN+_peptidase_M67A"/>
</dbReference>
<dbReference type="InterPro" id="IPR037518">
    <property type="entry name" value="MPN"/>
</dbReference>
<dbReference type="InterPro" id="IPR056263">
    <property type="entry name" value="RPN11_C"/>
</dbReference>
<dbReference type="PANTHER" id="PTHR10410">
    <property type="entry name" value="EUKARYOTIC TRANSLATION INITIATION FACTOR 3 -RELATED"/>
    <property type="match status" value="1"/>
</dbReference>
<dbReference type="Pfam" id="PF01398">
    <property type="entry name" value="JAB"/>
    <property type="match status" value="1"/>
</dbReference>
<dbReference type="Pfam" id="PF23594">
    <property type="entry name" value="RPN11_C"/>
    <property type="match status" value="1"/>
</dbReference>
<dbReference type="SMART" id="SM00232">
    <property type="entry name" value="JAB_MPN"/>
    <property type="match status" value="1"/>
</dbReference>
<dbReference type="SUPFAM" id="SSF102712">
    <property type="entry name" value="JAB1/MPN domain"/>
    <property type="match status" value="1"/>
</dbReference>
<dbReference type="PROSITE" id="PS50249">
    <property type="entry name" value="MPN"/>
    <property type="match status" value="1"/>
</dbReference>
<name>PSDE_DROME</name>
<sequence>MDRLLRLGGAMPQAAPPTDAPVVDTAEQVYISSLALLKMLKHGRAGVPMEVMGLMLGEFVDDYTVQVIDVFAMPQTGTGVSVEAVDPVFQAKMLDMLKQTGRPEMVVGWYHSHPGFGCWLSGVDINTQQSFEALSERAVAVVVDPIQSVKGKVVIDAFRLINPNMLVLGQEPRQTTSNLGHLQKPSVQALIHGLNRHYYSISINYRKNELEQKMLLNLHKKSWKDGLTLSDYNEHCSINEDTVAEMLDLAKNYNKSLEDEEKMTPEQLAIKNVGKQDPKRHLEEKVDKVMQNNIVQCLGAMLDTIVFK</sequence>
<keyword id="KW-0903">Direct protein sequencing</keyword>
<keyword id="KW-0378">Hydrolase</keyword>
<keyword id="KW-0479">Metal-binding</keyword>
<keyword id="KW-0482">Metalloprotease</keyword>
<keyword id="KW-0645">Protease</keyword>
<keyword id="KW-0647">Proteasome</keyword>
<keyword id="KW-1185">Reference proteome</keyword>
<keyword id="KW-0833">Ubl conjugation pathway</keyword>
<keyword id="KW-0862">Zinc</keyword>
<evidence type="ECO:0000250" key="1"/>
<evidence type="ECO:0000255" key="2">
    <source>
        <dbReference type="PROSITE-ProRule" id="PRU01182"/>
    </source>
</evidence>
<evidence type="ECO:0000269" key="3">
    <source>
    </source>
</evidence>
<evidence type="ECO:0000305" key="4"/>
<gene>
    <name type="primary">Rpn11</name>
    <name type="synonym">yip5</name>
    <name type="ORF">CG18174</name>
</gene>
<comment type="function">
    <text evidence="1 3">Metalloprotease component of the 26S proteasome that specifically cleaves 'Lys-63'-linked polyubiquitin chains. The 26S proteasome is involved in the ATP-dependent degradation of ubiquitinated proteins. The function of the 'Lys-63'-specific deubiquitination of the proteasome is unclear (By similarity).</text>
</comment>
<comment type="subunit">
    <text>Component of the 19S regulatory cap of the 26S proteasome.</text>
</comment>
<comment type="interaction">
    <interactant intactId="EBI-178674">
        <id>Q9V3H2</id>
    </interactant>
    <interactant intactId="EBI-253612">
        <id>P26270</id>
        <label>Rpn8</label>
    </interactant>
    <organismsDiffer>false</organismsDiffer>
    <experiments>3</experiments>
</comment>
<comment type="similarity">
    <text evidence="4">Belongs to the peptidase M67A family. PSMD14 subfamily.</text>
</comment>
<organism>
    <name type="scientific">Drosophila melanogaster</name>
    <name type="common">Fruit fly</name>
    <dbReference type="NCBI Taxonomy" id="7227"/>
    <lineage>
        <taxon>Eukaryota</taxon>
        <taxon>Metazoa</taxon>
        <taxon>Ecdysozoa</taxon>
        <taxon>Arthropoda</taxon>
        <taxon>Hexapoda</taxon>
        <taxon>Insecta</taxon>
        <taxon>Pterygota</taxon>
        <taxon>Neoptera</taxon>
        <taxon>Endopterygota</taxon>
        <taxon>Diptera</taxon>
        <taxon>Brachycera</taxon>
        <taxon>Muscomorpha</taxon>
        <taxon>Ephydroidea</taxon>
        <taxon>Drosophilidae</taxon>
        <taxon>Drosophila</taxon>
        <taxon>Sophophora</taxon>
    </lineage>
</organism>
<feature type="chain" id="PRO_0000213955" description="26S proteasome non-ATPase regulatory subunit 14">
    <location>
        <begin position="1"/>
        <end position="308"/>
    </location>
</feature>
<feature type="domain" description="MPN" evidence="2">
    <location>
        <begin position="29"/>
        <end position="164"/>
    </location>
</feature>
<feature type="short sequence motif" description="JAMM motif" evidence="2">
    <location>
        <begin position="111"/>
        <end position="124"/>
    </location>
</feature>
<feature type="binding site" evidence="2">
    <location>
        <position position="111"/>
    </location>
    <ligand>
        <name>Zn(2+)</name>
        <dbReference type="ChEBI" id="CHEBI:29105"/>
        <note>catalytic</note>
    </ligand>
</feature>
<feature type="binding site" evidence="2">
    <location>
        <position position="113"/>
    </location>
    <ligand>
        <name>Zn(2+)</name>
        <dbReference type="ChEBI" id="CHEBI:29105"/>
        <note>catalytic</note>
    </ligand>
</feature>
<feature type="binding site" evidence="2">
    <location>
        <position position="124"/>
    </location>
    <ligand>
        <name>Zn(2+)</name>
        <dbReference type="ChEBI" id="CHEBI:29105"/>
        <note>catalytic</note>
    </ligand>
</feature>
<feature type="sequence conflict" description="In Ref. 5; AAF27818." evidence="4" ref="5">
    <original>DP</original>
    <variation>YS</variation>
    <location>
        <begin position="144"/>
        <end position="145"/>
    </location>
</feature>
<feature type="sequence conflict" description="In Ref. 5; AAF27818." evidence="4" ref="5">
    <original>L</original>
    <variation>F</variation>
    <location>
        <position position="249"/>
    </location>
</feature>
<feature type="sequence conflict" description="In Ref. 1; AA sequence." evidence="4" ref="1">
    <original>L</original>
    <variation>C</variation>
    <location>
        <position position="268"/>
    </location>
</feature>